<dbReference type="EC" id="3.6.5.-" evidence="1"/>
<dbReference type="EMBL" id="CP000922">
    <property type="protein sequence ID" value="ACJ33077.1"/>
    <property type="molecule type" value="Genomic_DNA"/>
</dbReference>
<dbReference type="SMR" id="B7GIR2"/>
<dbReference type="STRING" id="491915.Aflv_0698"/>
<dbReference type="GeneID" id="7036955"/>
<dbReference type="KEGG" id="afl:Aflv_0698"/>
<dbReference type="eggNOG" id="COG0536">
    <property type="taxonomic scope" value="Bacteria"/>
</dbReference>
<dbReference type="HOGENOM" id="CLU_011747_2_1_9"/>
<dbReference type="Proteomes" id="UP000000742">
    <property type="component" value="Chromosome"/>
</dbReference>
<dbReference type="GO" id="GO:0005737">
    <property type="term" value="C:cytoplasm"/>
    <property type="evidence" value="ECO:0007669"/>
    <property type="project" value="UniProtKB-SubCell"/>
</dbReference>
<dbReference type="GO" id="GO:0005525">
    <property type="term" value="F:GTP binding"/>
    <property type="evidence" value="ECO:0007669"/>
    <property type="project" value="UniProtKB-UniRule"/>
</dbReference>
<dbReference type="GO" id="GO:0003924">
    <property type="term" value="F:GTPase activity"/>
    <property type="evidence" value="ECO:0007669"/>
    <property type="project" value="UniProtKB-UniRule"/>
</dbReference>
<dbReference type="GO" id="GO:0000287">
    <property type="term" value="F:magnesium ion binding"/>
    <property type="evidence" value="ECO:0007669"/>
    <property type="project" value="InterPro"/>
</dbReference>
<dbReference type="GO" id="GO:0042254">
    <property type="term" value="P:ribosome biogenesis"/>
    <property type="evidence" value="ECO:0007669"/>
    <property type="project" value="UniProtKB-UniRule"/>
</dbReference>
<dbReference type="CDD" id="cd01898">
    <property type="entry name" value="Obg"/>
    <property type="match status" value="1"/>
</dbReference>
<dbReference type="FunFam" id="2.70.210.12:FF:000001">
    <property type="entry name" value="GTPase Obg"/>
    <property type="match status" value="1"/>
</dbReference>
<dbReference type="FunFam" id="3.40.50.300:FF:000515">
    <property type="entry name" value="GTPase Obg"/>
    <property type="match status" value="1"/>
</dbReference>
<dbReference type="Gene3D" id="3.30.300.350">
    <property type="entry name" value="GTP-binding protein OBG, C-terminal domain"/>
    <property type="match status" value="1"/>
</dbReference>
<dbReference type="Gene3D" id="2.70.210.12">
    <property type="entry name" value="GTP1/OBG domain"/>
    <property type="match status" value="1"/>
</dbReference>
<dbReference type="Gene3D" id="3.40.50.300">
    <property type="entry name" value="P-loop containing nucleotide triphosphate hydrolases"/>
    <property type="match status" value="1"/>
</dbReference>
<dbReference type="HAMAP" id="MF_01454">
    <property type="entry name" value="GTPase_Obg"/>
    <property type="match status" value="1"/>
</dbReference>
<dbReference type="InterPro" id="IPR031167">
    <property type="entry name" value="G_OBG"/>
</dbReference>
<dbReference type="InterPro" id="IPR006073">
    <property type="entry name" value="GTP-bd"/>
</dbReference>
<dbReference type="InterPro" id="IPR014100">
    <property type="entry name" value="GTP-bd_Obg/CgtA"/>
</dbReference>
<dbReference type="InterPro" id="IPR036346">
    <property type="entry name" value="GTP-bd_prot_GTP1/OBG_C_sf"/>
</dbReference>
<dbReference type="InterPro" id="IPR006074">
    <property type="entry name" value="GTP1-OBG_CS"/>
</dbReference>
<dbReference type="InterPro" id="IPR006169">
    <property type="entry name" value="GTP1_OBG_dom"/>
</dbReference>
<dbReference type="InterPro" id="IPR036726">
    <property type="entry name" value="GTP1_OBG_dom_sf"/>
</dbReference>
<dbReference type="InterPro" id="IPR045086">
    <property type="entry name" value="OBG_GTPase"/>
</dbReference>
<dbReference type="InterPro" id="IPR015349">
    <property type="entry name" value="OCT_dom"/>
</dbReference>
<dbReference type="InterPro" id="IPR027417">
    <property type="entry name" value="P-loop_NTPase"/>
</dbReference>
<dbReference type="InterPro" id="IPR005225">
    <property type="entry name" value="Small_GTP-bd"/>
</dbReference>
<dbReference type="NCBIfam" id="TIGR02729">
    <property type="entry name" value="Obg_CgtA"/>
    <property type="match status" value="1"/>
</dbReference>
<dbReference type="NCBIfam" id="TIGR03595">
    <property type="entry name" value="Obg_CgtA_exten"/>
    <property type="match status" value="1"/>
</dbReference>
<dbReference type="NCBIfam" id="NF008954">
    <property type="entry name" value="PRK12296.1"/>
    <property type="match status" value="1"/>
</dbReference>
<dbReference type="NCBIfam" id="NF008955">
    <property type="entry name" value="PRK12297.1"/>
    <property type="match status" value="1"/>
</dbReference>
<dbReference type="NCBIfam" id="NF008956">
    <property type="entry name" value="PRK12299.1"/>
    <property type="match status" value="1"/>
</dbReference>
<dbReference type="NCBIfam" id="TIGR00231">
    <property type="entry name" value="small_GTP"/>
    <property type="match status" value="1"/>
</dbReference>
<dbReference type="PANTHER" id="PTHR11702">
    <property type="entry name" value="DEVELOPMENTALLY REGULATED GTP-BINDING PROTEIN-RELATED"/>
    <property type="match status" value="1"/>
</dbReference>
<dbReference type="PANTHER" id="PTHR11702:SF31">
    <property type="entry name" value="MITOCHONDRIAL RIBOSOME-ASSOCIATED GTPASE 2"/>
    <property type="match status" value="1"/>
</dbReference>
<dbReference type="Pfam" id="PF09269">
    <property type="entry name" value="DUF1967"/>
    <property type="match status" value="1"/>
</dbReference>
<dbReference type="Pfam" id="PF01018">
    <property type="entry name" value="GTP1_OBG"/>
    <property type="match status" value="1"/>
</dbReference>
<dbReference type="Pfam" id="PF01926">
    <property type="entry name" value="MMR_HSR1"/>
    <property type="match status" value="1"/>
</dbReference>
<dbReference type="PIRSF" id="PIRSF002401">
    <property type="entry name" value="GTP_bd_Obg/CgtA"/>
    <property type="match status" value="1"/>
</dbReference>
<dbReference type="PRINTS" id="PR00326">
    <property type="entry name" value="GTP1OBG"/>
</dbReference>
<dbReference type="SUPFAM" id="SSF102741">
    <property type="entry name" value="Obg GTP-binding protein C-terminal domain"/>
    <property type="match status" value="1"/>
</dbReference>
<dbReference type="SUPFAM" id="SSF82051">
    <property type="entry name" value="Obg GTP-binding protein N-terminal domain"/>
    <property type="match status" value="1"/>
</dbReference>
<dbReference type="SUPFAM" id="SSF52540">
    <property type="entry name" value="P-loop containing nucleoside triphosphate hydrolases"/>
    <property type="match status" value="1"/>
</dbReference>
<dbReference type="PROSITE" id="PS51710">
    <property type="entry name" value="G_OBG"/>
    <property type="match status" value="1"/>
</dbReference>
<dbReference type="PROSITE" id="PS00905">
    <property type="entry name" value="GTP1_OBG"/>
    <property type="match status" value="1"/>
</dbReference>
<dbReference type="PROSITE" id="PS51883">
    <property type="entry name" value="OBG"/>
    <property type="match status" value="1"/>
</dbReference>
<dbReference type="PROSITE" id="PS51881">
    <property type="entry name" value="OCT"/>
    <property type="match status" value="1"/>
</dbReference>
<organism>
    <name type="scientific">Anoxybacillus flavithermus (strain DSM 21510 / WK1)</name>
    <dbReference type="NCBI Taxonomy" id="491915"/>
    <lineage>
        <taxon>Bacteria</taxon>
        <taxon>Bacillati</taxon>
        <taxon>Bacillota</taxon>
        <taxon>Bacilli</taxon>
        <taxon>Bacillales</taxon>
        <taxon>Anoxybacillaceae</taxon>
        <taxon>Anoxybacillus</taxon>
    </lineage>
</organism>
<sequence length="428" mass="47665">MFVDQVKIYVKGGDGGNGMVAFRREKYVPKGGPAGGDGGKGGDVVFVVDEGLRTLMDFRYQRHFKAPRGEHGMSKNQHGKNAEDLIVKVPPGTVVIDDETKEVIADLTEHGQRFVVAKGGRGGRGNTRFATASNPAPEIAENGEPGQERYVTLELKLLADVGLVGFPSVGKSTLLSVVSAAKPKIADYHFTTIVPNLGVVETEDGRSFVMADLPGLIEGAHQGVGLGHQFLRHIERTRVIVHVIDMAAIEGRDPYEDYVVINEELKQYNLRLTERPQIIVANKMDMPNAEEHLQQFKQKLNEDVPIFPISAVTRQGIRELLFAIADLLETTPEFPLYPQEEEAIHRVVYKLEKEEAPFHITRDDDGTFILSGEKIEKLFKMTDFSREESVRRFARQLRSLGVDDALRARGAKDGDIVKLLNYEFEFVD</sequence>
<name>OBG_ANOFW</name>
<reference key="1">
    <citation type="journal article" date="2008" name="Genome Biol.">
        <title>Encapsulated in silica: genome, proteome and physiology of the thermophilic bacterium Anoxybacillus flavithermus WK1.</title>
        <authorList>
            <person name="Saw J.H."/>
            <person name="Mountain B.W."/>
            <person name="Feng L."/>
            <person name="Omelchenko M.V."/>
            <person name="Hou S."/>
            <person name="Saito J.A."/>
            <person name="Stott M.B."/>
            <person name="Li D."/>
            <person name="Zhao G."/>
            <person name="Wu J."/>
            <person name="Galperin M.Y."/>
            <person name="Koonin E.V."/>
            <person name="Makarova K.S."/>
            <person name="Wolf Y.I."/>
            <person name="Rigden D.J."/>
            <person name="Dunfield P.F."/>
            <person name="Wang L."/>
            <person name="Alam M."/>
        </authorList>
    </citation>
    <scope>NUCLEOTIDE SEQUENCE [LARGE SCALE GENOMIC DNA]</scope>
    <source>
        <strain>DSM 21510 / WK1</strain>
    </source>
</reference>
<proteinExistence type="inferred from homology"/>
<keyword id="KW-0963">Cytoplasm</keyword>
<keyword id="KW-0342">GTP-binding</keyword>
<keyword id="KW-0378">Hydrolase</keyword>
<keyword id="KW-0460">Magnesium</keyword>
<keyword id="KW-0479">Metal-binding</keyword>
<keyword id="KW-0547">Nucleotide-binding</keyword>
<feature type="chain" id="PRO_0000385701" description="GTPase Obg">
    <location>
        <begin position="1"/>
        <end position="428"/>
    </location>
</feature>
<feature type="domain" description="Obg" evidence="3">
    <location>
        <begin position="1"/>
        <end position="158"/>
    </location>
</feature>
<feature type="domain" description="OBG-type G" evidence="1">
    <location>
        <begin position="159"/>
        <end position="329"/>
    </location>
</feature>
<feature type="domain" description="OCT" evidence="2">
    <location>
        <begin position="350"/>
        <end position="428"/>
    </location>
</feature>
<feature type="binding site" evidence="1">
    <location>
        <begin position="165"/>
        <end position="172"/>
    </location>
    <ligand>
        <name>GTP</name>
        <dbReference type="ChEBI" id="CHEBI:37565"/>
    </ligand>
</feature>
<feature type="binding site" evidence="1">
    <location>
        <position position="172"/>
    </location>
    <ligand>
        <name>Mg(2+)</name>
        <dbReference type="ChEBI" id="CHEBI:18420"/>
    </ligand>
</feature>
<feature type="binding site" evidence="1">
    <location>
        <begin position="190"/>
        <end position="194"/>
    </location>
    <ligand>
        <name>GTP</name>
        <dbReference type="ChEBI" id="CHEBI:37565"/>
    </ligand>
</feature>
<feature type="binding site" evidence="1">
    <location>
        <position position="192"/>
    </location>
    <ligand>
        <name>Mg(2+)</name>
        <dbReference type="ChEBI" id="CHEBI:18420"/>
    </ligand>
</feature>
<feature type="binding site" evidence="1">
    <location>
        <begin position="212"/>
        <end position="215"/>
    </location>
    <ligand>
        <name>GTP</name>
        <dbReference type="ChEBI" id="CHEBI:37565"/>
    </ligand>
</feature>
<feature type="binding site" evidence="1">
    <location>
        <begin position="282"/>
        <end position="285"/>
    </location>
    <ligand>
        <name>GTP</name>
        <dbReference type="ChEBI" id="CHEBI:37565"/>
    </ligand>
</feature>
<feature type="binding site" evidence="1">
    <location>
        <begin position="310"/>
        <end position="312"/>
    </location>
    <ligand>
        <name>GTP</name>
        <dbReference type="ChEBI" id="CHEBI:37565"/>
    </ligand>
</feature>
<protein>
    <recommendedName>
        <fullName evidence="1">GTPase Obg</fullName>
        <ecNumber evidence="1">3.6.5.-</ecNumber>
    </recommendedName>
    <alternativeName>
        <fullName evidence="1">GTP-binding protein Obg</fullName>
    </alternativeName>
</protein>
<gene>
    <name evidence="1" type="primary">obg</name>
    <name type="ordered locus">Aflv_0698</name>
</gene>
<comment type="function">
    <text evidence="1">An essential GTPase which binds GTP, GDP and possibly (p)ppGpp with moderate affinity, with high nucleotide exchange rates and a fairly low GTP hydrolysis rate. Plays a role in control of the cell cycle, stress response, ribosome biogenesis and in those bacteria that undergo differentiation, in morphogenesis control.</text>
</comment>
<comment type="cofactor">
    <cofactor evidence="1">
        <name>Mg(2+)</name>
        <dbReference type="ChEBI" id="CHEBI:18420"/>
    </cofactor>
</comment>
<comment type="subunit">
    <text evidence="1">Monomer.</text>
</comment>
<comment type="subcellular location">
    <subcellularLocation>
        <location evidence="1">Cytoplasm</location>
    </subcellularLocation>
</comment>
<comment type="similarity">
    <text evidence="1">Belongs to the TRAFAC class OBG-HflX-like GTPase superfamily. OBG GTPase family.</text>
</comment>
<evidence type="ECO:0000255" key="1">
    <source>
        <dbReference type="HAMAP-Rule" id="MF_01454"/>
    </source>
</evidence>
<evidence type="ECO:0000255" key="2">
    <source>
        <dbReference type="PROSITE-ProRule" id="PRU01229"/>
    </source>
</evidence>
<evidence type="ECO:0000255" key="3">
    <source>
        <dbReference type="PROSITE-ProRule" id="PRU01231"/>
    </source>
</evidence>
<accession>B7GIR2</accession>